<reference key="1">
    <citation type="journal article" date="1996" name="Science">
        <title>Complete genome sequence of the methanogenic archaeon, Methanococcus jannaschii.</title>
        <authorList>
            <person name="Bult C.J."/>
            <person name="White O."/>
            <person name="Olsen G.J."/>
            <person name="Zhou L."/>
            <person name="Fleischmann R.D."/>
            <person name="Sutton G.G."/>
            <person name="Blake J.A."/>
            <person name="FitzGerald L.M."/>
            <person name="Clayton R.A."/>
            <person name="Gocayne J.D."/>
            <person name="Kerlavage A.R."/>
            <person name="Dougherty B.A."/>
            <person name="Tomb J.-F."/>
            <person name="Adams M.D."/>
            <person name="Reich C.I."/>
            <person name="Overbeek R."/>
            <person name="Kirkness E.F."/>
            <person name="Weinstock K.G."/>
            <person name="Merrick J.M."/>
            <person name="Glodek A."/>
            <person name="Scott J.L."/>
            <person name="Geoghagen N.S.M."/>
            <person name="Weidman J.F."/>
            <person name="Fuhrmann J.L."/>
            <person name="Nguyen D."/>
            <person name="Utterback T.R."/>
            <person name="Kelley J.M."/>
            <person name="Peterson J.D."/>
            <person name="Sadow P.W."/>
            <person name="Hanna M.C."/>
            <person name="Cotton M.D."/>
            <person name="Roberts K.M."/>
            <person name="Hurst M.A."/>
            <person name="Kaine B.P."/>
            <person name="Borodovsky M."/>
            <person name="Klenk H.-P."/>
            <person name="Fraser C.M."/>
            <person name="Smith H.O."/>
            <person name="Woese C.R."/>
            <person name="Venter J.C."/>
        </authorList>
    </citation>
    <scope>NUCLEOTIDE SEQUENCE [LARGE SCALE GENOMIC DNA]</scope>
    <source>
        <strain>ATCC 43067 / DSM 2661 / JAL-1 / JCM 10045 / NBRC 100440</strain>
    </source>
</reference>
<gene>
    <name type="primary">flaB1</name>
    <name type="ordered locus">MJ0891</name>
</gene>
<organism>
    <name type="scientific">Methanocaldococcus jannaschii (strain ATCC 43067 / DSM 2661 / JAL-1 / JCM 10045 / NBRC 100440)</name>
    <name type="common">Methanococcus jannaschii</name>
    <dbReference type="NCBI Taxonomy" id="243232"/>
    <lineage>
        <taxon>Archaea</taxon>
        <taxon>Methanobacteriati</taxon>
        <taxon>Methanobacteriota</taxon>
        <taxon>Methanomada group</taxon>
        <taxon>Methanococci</taxon>
        <taxon>Methanococcales</taxon>
        <taxon>Methanocaldococcaceae</taxon>
        <taxon>Methanocaldococcus</taxon>
    </lineage>
</organism>
<dbReference type="EMBL" id="L77117">
    <property type="protein sequence ID" value="AAB98894.1"/>
    <property type="molecule type" value="Genomic_DNA"/>
</dbReference>
<dbReference type="PIR" id="C64411">
    <property type="entry name" value="C64411"/>
</dbReference>
<dbReference type="RefSeq" id="WP_010870405.1">
    <property type="nucleotide sequence ID" value="NC_000909.1"/>
</dbReference>
<dbReference type="PDB" id="5YA6">
    <property type="method" value="X-ray"/>
    <property type="resolution" value="1.50 A"/>
    <property type="chains" value="A/B=13-217"/>
</dbReference>
<dbReference type="PDBsum" id="5YA6"/>
<dbReference type="SMR" id="Q58301"/>
<dbReference type="FunCoup" id="Q58301">
    <property type="interactions" value="2"/>
</dbReference>
<dbReference type="STRING" id="243232.MJ_0891"/>
<dbReference type="PaxDb" id="243232-MJ_0891"/>
<dbReference type="EnsemblBacteria" id="AAB98894">
    <property type="protein sequence ID" value="AAB98894"/>
    <property type="gene ID" value="MJ_0891"/>
</dbReference>
<dbReference type="GeneID" id="1451780"/>
<dbReference type="KEGG" id="mja:MJ_0891"/>
<dbReference type="eggNOG" id="arCOG01829">
    <property type="taxonomic scope" value="Archaea"/>
</dbReference>
<dbReference type="HOGENOM" id="CLU_051124_0_1_2"/>
<dbReference type="InParanoid" id="Q58301"/>
<dbReference type="OrthoDB" id="102632at2157"/>
<dbReference type="PhylomeDB" id="Q58301"/>
<dbReference type="Proteomes" id="UP000000805">
    <property type="component" value="Chromosome"/>
</dbReference>
<dbReference type="GO" id="GO:0097589">
    <property type="term" value="C:archaeal-type flagellum"/>
    <property type="evidence" value="ECO:0007669"/>
    <property type="project" value="UniProtKB-SubCell"/>
</dbReference>
<dbReference type="GO" id="GO:0005198">
    <property type="term" value="F:structural molecule activity"/>
    <property type="evidence" value="ECO:0007669"/>
    <property type="project" value="InterPro"/>
</dbReference>
<dbReference type="GO" id="GO:0097588">
    <property type="term" value="P:archaeal or bacterial-type flagellum-dependent cell motility"/>
    <property type="evidence" value="ECO:0007669"/>
    <property type="project" value="InterPro"/>
</dbReference>
<dbReference type="InterPro" id="IPR013373">
    <property type="entry name" value="Flagellin/pilin_N_arc"/>
</dbReference>
<dbReference type="InterPro" id="IPR002774">
    <property type="entry name" value="Flagellin_arc"/>
</dbReference>
<dbReference type="NCBIfam" id="TIGR02537">
    <property type="entry name" value="arch_flag_Nterm"/>
    <property type="match status" value="1"/>
</dbReference>
<dbReference type="NCBIfam" id="NF006325">
    <property type="entry name" value="PRK08541.1"/>
    <property type="match status" value="1"/>
</dbReference>
<dbReference type="PANTHER" id="PTHR35903">
    <property type="entry name" value="FLAGELLIN B1"/>
    <property type="match status" value="1"/>
</dbReference>
<dbReference type="PANTHER" id="PTHR35903:SF1">
    <property type="entry name" value="FLAGELLIN B1"/>
    <property type="match status" value="1"/>
</dbReference>
<dbReference type="Pfam" id="PF01917">
    <property type="entry name" value="Arch_flagellin"/>
    <property type="match status" value="1"/>
</dbReference>
<comment type="function">
    <text>Flagellin is the subunit protein which polymerizes to form the filaments of archaeal flagella.</text>
</comment>
<comment type="subcellular location">
    <subcellularLocation>
        <location>Archaeal flagellum</location>
    </subcellularLocation>
</comment>
<comment type="similarity">
    <text evidence="2">Belongs to the archaeal flagellin family.</text>
</comment>
<sequence>MKVFEFLKGKRGAMGIGTLIIFIAMVLVAAVAAAVLINTSGFLQQKAMATGKESTEQVASGLMCIGVTGHYDKTLGGIDKLAIYITPNAGSAPIDLKNAKLFLIYDGESHVLNYSTVTTATLGADDIFNSSAITDWSLADSSSYVVGVIQDADGSLSNGVINKGDIAVLLVNANAVFNKAIPTRSEVSGQFQPEFGAPAVIQFTTPAAYTQTVIELQ</sequence>
<feature type="propeptide" id="PRO_0000009373" evidence="1">
    <location>
        <begin position="1"/>
        <end position="12"/>
    </location>
</feature>
<feature type="chain" id="PRO_0000009374" description="Flagellin B1">
    <location>
        <begin position="13"/>
        <end position="217"/>
    </location>
</feature>
<feature type="strand" evidence="3">
    <location>
        <begin position="61"/>
        <end position="72"/>
    </location>
</feature>
<feature type="turn" evidence="3">
    <location>
        <begin position="73"/>
        <end position="76"/>
    </location>
</feature>
<feature type="strand" evidence="3">
    <location>
        <begin position="77"/>
        <end position="87"/>
    </location>
</feature>
<feature type="strand" evidence="3">
    <location>
        <begin position="100"/>
        <end position="105"/>
    </location>
</feature>
<feature type="strand" evidence="3">
    <location>
        <begin position="108"/>
        <end position="119"/>
    </location>
</feature>
<feature type="turn" evidence="3">
    <location>
        <begin position="120"/>
        <end position="123"/>
    </location>
</feature>
<feature type="turn" evidence="3">
    <location>
        <begin position="130"/>
        <end position="132"/>
    </location>
</feature>
<feature type="helix" evidence="3">
    <location>
        <begin position="134"/>
        <end position="138"/>
    </location>
</feature>
<feature type="strand" evidence="3">
    <location>
        <begin position="141"/>
        <end position="150"/>
    </location>
</feature>
<feature type="strand" evidence="3">
    <location>
        <begin position="152"/>
        <end position="154"/>
    </location>
</feature>
<feature type="helix" evidence="3">
    <location>
        <begin position="155"/>
        <end position="158"/>
    </location>
</feature>
<feature type="strand" evidence="3">
    <location>
        <begin position="166"/>
        <end position="172"/>
    </location>
</feature>
<feature type="helix" evidence="3">
    <location>
        <begin position="173"/>
        <end position="177"/>
    </location>
</feature>
<feature type="strand" evidence="3">
    <location>
        <begin position="186"/>
        <end position="192"/>
    </location>
</feature>
<feature type="strand" evidence="3">
    <location>
        <begin position="194"/>
        <end position="197"/>
    </location>
</feature>
<feature type="strand" evidence="3">
    <location>
        <begin position="199"/>
        <end position="204"/>
    </location>
</feature>
<feature type="strand" evidence="3">
    <location>
        <begin position="211"/>
        <end position="217"/>
    </location>
</feature>
<accession>Q58301</accession>
<evidence type="ECO:0000250" key="1"/>
<evidence type="ECO:0000305" key="2"/>
<evidence type="ECO:0007829" key="3">
    <source>
        <dbReference type="PDB" id="5YA6"/>
    </source>
</evidence>
<keyword id="KW-0002">3D-structure</keyword>
<keyword id="KW-0974">Archaeal flagellum</keyword>
<keyword id="KW-1185">Reference proteome</keyword>
<protein>
    <recommendedName>
        <fullName>Flagellin B1</fullName>
    </recommendedName>
</protein>
<name>FLAB1_METJA</name>
<proteinExistence type="evidence at protein level"/>